<feature type="chain" id="PRO_1000130430" description="Mannosyl-3-phosphoglycerate phosphatase">
    <location>
        <begin position="1"/>
        <end position="271"/>
    </location>
</feature>
<feature type="active site" description="Nucleophile" evidence="1">
    <location>
        <position position="13"/>
    </location>
</feature>
<feature type="binding site" evidence="1">
    <location>
        <position position="13"/>
    </location>
    <ligand>
        <name>Mg(2+)</name>
        <dbReference type="ChEBI" id="CHEBI:18420"/>
    </ligand>
</feature>
<feature type="binding site" evidence="1">
    <location>
        <position position="15"/>
    </location>
    <ligand>
        <name>Mg(2+)</name>
        <dbReference type="ChEBI" id="CHEBI:18420"/>
    </ligand>
</feature>
<feature type="binding site" evidence="1">
    <location>
        <position position="214"/>
    </location>
    <ligand>
        <name>Mg(2+)</name>
        <dbReference type="ChEBI" id="CHEBI:18420"/>
    </ligand>
</feature>
<name>MPGP_ECO45</name>
<keyword id="KW-0963">Cytoplasm</keyword>
<keyword id="KW-0378">Hydrolase</keyword>
<keyword id="KW-0460">Magnesium</keyword>
<keyword id="KW-0479">Metal-binding</keyword>
<keyword id="KW-1185">Reference proteome</keyword>
<organism>
    <name type="scientific">Escherichia coli O45:K1 (strain S88 / ExPEC)</name>
    <dbReference type="NCBI Taxonomy" id="585035"/>
    <lineage>
        <taxon>Bacteria</taxon>
        <taxon>Pseudomonadati</taxon>
        <taxon>Pseudomonadota</taxon>
        <taxon>Gammaproteobacteria</taxon>
        <taxon>Enterobacterales</taxon>
        <taxon>Enterobacteriaceae</taxon>
        <taxon>Escherichia</taxon>
    </lineage>
</organism>
<accession>B7MCL0</accession>
<comment type="catalytic activity">
    <reaction evidence="1">
        <text>2-O-(alpha-D-mannosyl)-3-phosphoglycerate + H2O = (2R)-2-O-(alpha-D-mannosyl)-glycerate + phosphate</text>
        <dbReference type="Rhea" id="RHEA:19309"/>
        <dbReference type="ChEBI" id="CHEBI:15377"/>
        <dbReference type="ChEBI" id="CHEBI:43474"/>
        <dbReference type="ChEBI" id="CHEBI:57541"/>
        <dbReference type="ChEBI" id="CHEBI:57744"/>
        <dbReference type="EC" id="3.1.3.70"/>
    </reaction>
</comment>
<comment type="cofactor">
    <cofactor evidence="1">
        <name>Mg(2+)</name>
        <dbReference type="ChEBI" id="CHEBI:18420"/>
    </cofactor>
</comment>
<comment type="subcellular location">
    <subcellularLocation>
        <location evidence="1">Cytoplasm</location>
    </subcellularLocation>
</comment>
<comment type="similarity">
    <text evidence="1">Belongs to the HAD-like hydrolase superfamily. MPGP family.</text>
</comment>
<gene>
    <name type="ordered locus">ECS88_2008</name>
</gene>
<dbReference type="EC" id="3.1.3.70" evidence="1"/>
<dbReference type="EMBL" id="CU928161">
    <property type="protein sequence ID" value="CAR03307.1"/>
    <property type="molecule type" value="Genomic_DNA"/>
</dbReference>
<dbReference type="RefSeq" id="WP_000949113.1">
    <property type="nucleotide sequence ID" value="NC_011742.1"/>
</dbReference>
<dbReference type="SMR" id="B7MCL0"/>
<dbReference type="KEGG" id="ecz:ECS88_2008"/>
<dbReference type="HOGENOM" id="CLU_063016_1_0_6"/>
<dbReference type="Proteomes" id="UP000000747">
    <property type="component" value="Chromosome"/>
</dbReference>
<dbReference type="GO" id="GO:0005829">
    <property type="term" value="C:cytosol"/>
    <property type="evidence" value="ECO:0007669"/>
    <property type="project" value="TreeGrafter"/>
</dbReference>
<dbReference type="GO" id="GO:0000287">
    <property type="term" value="F:magnesium ion binding"/>
    <property type="evidence" value="ECO:0007669"/>
    <property type="project" value="TreeGrafter"/>
</dbReference>
<dbReference type="GO" id="GO:0050531">
    <property type="term" value="F:mannosyl-3-phosphoglycerate phosphatase activity"/>
    <property type="evidence" value="ECO:0007669"/>
    <property type="project" value="UniProtKB-UniRule"/>
</dbReference>
<dbReference type="GO" id="GO:0051479">
    <property type="term" value="P:mannosylglycerate biosynthetic process"/>
    <property type="evidence" value="ECO:0007669"/>
    <property type="project" value="InterPro"/>
</dbReference>
<dbReference type="CDD" id="cd07507">
    <property type="entry name" value="HAD_Pase"/>
    <property type="match status" value="1"/>
</dbReference>
<dbReference type="Gene3D" id="3.40.50.1000">
    <property type="entry name" value="HAD superfamily/HAD-like"/>
    <property type="match status" value="1"/>
</dbReference>
<dbReference type="Gene3D" id="3.30.980.20">
    <property type="entry name" value="Putative mannosyl-3-phosphoglycerate phosphatase, domain 2"/>
    <property type="match status" value="1"/>
</dbReference>
<dbReference type="HAMAP" id="MF_00617">
    <property type="entry name" value="MPGP_rel"/>
    <property type="match status" value="1"/>
</dbReference>
<dbReference type="InterPro" id="IPR036412">
    <property type="entry name" value="HAD-like_sf"/>
</dbReference>
<dbReference type="InterPro" id="IPR006381">
    <property type="entry name" value="HAD-SF-IIB-MPGP"/>
</dbReference>
<dbReference type="InterPro" id="IPR006379">
    <property type="entry name" value="HAD-SF_hydro_IIB"/>
</dbReference>
<dbReference type="InterPro" id="IPR023214">
    <property type="entry name" value="HAD_sf"/>
</dbReference>
<dbReference type="InterPro" id="IPR012815">
    <property type="entry name" value="MPG_Pase"/>
</dbReference>
<dbReference type="NCBIfam" id="TIGR01484">
    <property type="entry name" value="HAD-SF-IIB"/>
    <property type="match status" value="1"/>
</dbReference>
<dbReference type="NCBIfam" id="TIGR01486">
    <property type="entry name" value="HAD-SF-IIB-MPGP"/>
    <property type="match status" value="1"/>
</dbReference>
<dbReference type="NCBIfam" id="TIGR02463">
    <property type="entry name" value="MPGP_rel"/>
    <property type="match status" value="1"/>
</dbReference>
<dbReference type="NCBIfam" id="NF002976">
    <property type="entry name" value="PRK03669.1"/>
    <property type="match status" value="1"/>
</dbReference>
<dbReference type="PANTHER" id="PTHR10000:SF8">
    <property type="entry name" value="HAD SUPERFAMILY HYDROLASE-LIKE, TYPE 3"/>
    <property type="match status" value="1"/>
</dbReference>
<dbReference type="PANTHER" id="PTHR10000">
    <property type="entry name" value="PHOSPHOSERINE PHOSPHATASE"/>
    <property type="match status" value="1"/>
</dbReference>
<dbReference type="Pfam" id="PF08282">
    <property type="entry name" value="Hydrolase_3"/>
    <property type="match status" value="1"/>
</dbReference>
<dbReference type="SFLD" id="SFLDG01142">
    <property type="entry name" value="C2.B.2:_Mannosyl-3-phosphoglyc"/>
    <property type="match status" value="1"/>
</dbReference>
<dbReference type="SFLD" id="SFLDG01140">
    <property type="entry name" value="C2.B:_Phosphomannomutase_and_P"/>
    <property type="match status" value="1"/>
</dbReference>
<dbReference type="SUPFAM" id="SSF56784">
    <property type="entry name" value="HAD-like"/>
    <property type="match status" value="1"/>
</dbReference>
<evidence type="ECO:0000255" key="1">
    <source>
        <dbReference type="HAMAP-Rule" id="MF_00617"/>
    </source>
</evidence>
<proteinExistence type="inferred from homology"/>
<sequence length="271" mass="30396">MLSIQQPLLVFSDLDGTLLDSHSYDWQPAAPWLSRLREANVPVILCSSKTSAEMLYLQKTLGLQGLPLIAENGAVIQLAEQWQDIDGFPRIISGISHGEISQVLNTLREKEHFKFTTFDDVDDATIAEWTGLSRSQAALTQLHEASVTLIWRDSDERMAQFTARLNELGLQFMQGARFWHVLDASAGKDQAANWIIATYQQSSGKRPTTLGLGDGPNDAPLLEVMDYAVIVKGLNREGVHLHDEDPTRVWRTQREGPEGWREGLDHFFSAR</sequence>
<protein>
    <recommendedName>
        <fullName evidence="1">Mannosyl-3-phosphoglycerate phosphatase</fullName>
        <shortName evidence="1">MPGP</shortName>
        <ecNumber evidence="1">3.1.3.70</ecNumber>
    </recommendedName>
</protein>
<reference key="1">
    <citation type="journal article" date="2009" name="PLoS Genet.">
        <title>Organised genome dynamics in the Escherichia coli species results in highly diverse adaptive paths.</title>
        <authorList>
            <person name="Touchon M."/>
            <person name="Hoede C."/>
            <person name="Tenaillon O."/>
            <person name="Barbe V."/>
            <person name="Baeriswyl S."/>
            <person name="Bidet P."/>
            <person name="Bingen E."/>
            <person name="Bonacorsi S."/>
            <person name="Bouchier C."/>
            <person name="Bouvet O."/>
            <person name="Calteau A."/>
            <person name="Chiapello H."/>
            <person name="Clermont O."/>
            <person name="Cruveiller S."/>
            <person name="Danchin A."/>
            <person name="Diard M."/>
            <person name="Dossat C."/>
            <person name="Karoui M.E."/>
            <person name="Frapy E."/>
            <person name="Garry L."/>
            <person name="Ghigo J.M."/>
            <person name="Gilles A.M."/>
            <person name="Johnson J."/>
            <person name="Le Bouguenec C."/>
            <person name="Lescat M."/>
            <person name="Mangenot S."/>
            <person name="Martinez-Jehanne V."/>
            <person name="Matic I."/>
            <person name="Nassif X."/>
            <person name="Oztas S."/>
            <person name="Petit M.A."/>
            <person name="Pichon C."/>
            <person name="Rouy Z."/>
            <person name="Ruf C.S."/>
            <person name="Schneider D."/>
            <person name="Tourret J."/>
            <person name="Vacherie B."/>
            <person name="Vallenet D."/>
            <person name="Medigue C."/>
            <person name="Rocha E.P.C."/>
            <person name="Denamur E."/>
        </authorList>
    </citation>
    <scope>NUCLEOTIDE SEQUENCE [LARGE SCALE GENOMIC DNA]</scope>
    <source>
        <strain>S88 / ExPEC</strain>
    </source>
</reference>